<reference key="1">
    <citation type="journal article" date="1986" name="Nucleic Acids Res.">
        <title>RNA 2 of tobacco rattle virus strain TCM encodes an unexpected gene.</title>
        <authorList>
            <person name="Angenent G.C."/>
            <person name="Linthorst H.J.M."/>
            <person name="van Belkum A.F."/>
            <person name="Cornelissen B.J.C."/>
            <person name="Bol J.F."/>
        </authorList>
    </citation>
    <scope>NUCLEOTIDE SEQUENCE [GENOMIC RNA]</scope>
</reference>
<reference key="2">
    <citation type="journal article" date="2002" name="Virology">
        <title>Immunogold localization of tobravirus 2b nematode transmission helper protein associated with virus particles.</title>
        <authorList>
            <person name="Vellios E."/>
            <person name="Duncan G."/>
            <person name="Brown D."/>
            <person name="MacFarlane S."/>
        </authorList>
    </citation>
    <scope>SUBCELLULAR LOCATION</scope>
    <source>
        <strain>Isolate PaY4</strain>
    </source>
</reference>
<accession>P05078</accession>
<organism>
    <name type="scientific">Tobacco rattle virus (strain TCM)</name>
    <dbReference type="NCBI Taxonomy" id="12299"/>
    <lineage>
        <taxon>Viruses</taxon>
        <taxon>Riboviria</taxon>
        <taxon>Orthornavirae</taxon>
        <taxon>Kitrinoviricota</taxon>
        <taxon>Alsuviricetes</taxon>
        <taxon>Martellivirales</taxon>
        <taxon>Virgaviridae</taxon>
        <taxon>Tobravirus</taxon>
        <taxon>Tobacco rattle virus</taxon>
    </lineage>
</organism>
<sequence>MGNGDWSSKWPNDHLFIDDFGKLVWFDVLTDIVKISHFVSQVPTDLSPIPSSYISFIDGRIPMCINHLGWVYIRVKFESEEVFYQKFGEVDVSRFGESELPPDFEVTFSKVTTLVNKSLVRKSELLEKMNNELKQELTNKLDSLEKVNVQLKKELSQAQQSNFTELRDGLILNFSKVGGRIHRMVVRSIQNQLKLVSEINNDGDRWATMGATVILKEGAQYLGFVVVKNDGKIGVKFDLTRLNSLDNQTLLASVV</sequence>
<organismHost>
    <name type="scientific">Beta vulgaris</name>
    <name type="common">Sugar beet</name>
    <dbReference type="NCBI Taxonomy" id="161934"/>
</organismHost>
<organismHost>
    <name type="scientific">Capsicum annuum</name>
    <name type="common">Capsicum pepper</name>
    <dbReference type="NCBI Taxonomy" id="4072"/>
</organismHost>
<organismHost>
    <name type="scientific">Hyacinthus</name>
    <dbReference type="NCBI Taxonomy" id="82024"/>
</organismHost>
<organismHost>
    <name type="scientific">Narcissus pseudonarcissus</name>
    <name type="common">Daffodil</name>
    <dbReference type="NCBI Taxonomy" id="39639"/>
</organismHost>
<organismHost>
    <name type="scientific">Nicotiana tabacum</name>
    <name type="common">Common tobacco</name>
    <dbReference type="NCBI Taxonomy" id="4097"/>
</organismHost>
<organismHost>
    <name type="scientific">Solanum tuberosum</name>
    <name type="common">Potato</name>
    <dbReference type="NCBI Taxonomy" id="4113"/>
</organismHost>
<organismHost>
    <name type="scientific">Spinacia oleracea</name>
    <name type="common">Spinach</name>
    <dbReference type="NCBI Taxonomy" id="3562"/>
</organismHost>
<organismHost>
    <name type="scientific">Stellaria media</name>
    <name type="common">Common chickweed</name>
    <name type="synonym">Alsine media</name>
    <dbReference type="NCBI Taxonomy" id="13274"/>
</organismHost>
<organismHost>
    <name type="scientific">Tulipa</name>
    <dbReference type="NCBI Taxonomy" id="13305"/>
</organismHost>
<organismHost>
    <name type="scientific">Viola arvensis</name>
    <name type="common">European field pansy</name>
    <name type="synonym">Field violet</name>
    <dbReference type="NCBI Taxonomy" id="97415"/>
</organismHost>
<evidence type="ECO:0000269" key="1">
    <source>
    </source>
</evidence>
<evidence type="ECO:0000305" key="2"/>
<protein>
    <recommendedName>
        <fullName>Protein 2b</fullName>
    </recommendedName>
    <alternativeName>
        <fullName>29.1 kDa protein</fullName>
    </alternativeName>
</protein>
<proteinExistence type="inferred from homology"/>
<comment type="function">
    <text>May function by interacting with a small, flexible domain located at the C-terminus of the CP, forming a bridge between the virus particle and the internal surface of the vector nematode feeding apparatus.</text>
</comment>
<comment type="subcellular location">
    <subcellularLocation>
        <location evidence="1">Virion</location>
    </subcellularLocation>
</comment>
<comment type="miscellaneous">
    <text>The genome of this virus consists of two linear, positive, single-stranded RNAs encapsidated in separate virions. They are designated RNA-1 and RNA-2.</text>
</comment>
<comment type="miscellaneous">
    <text>This protein was translated from the RNA-2.</text>
</comment>
<comment type="similarity">
    <text evidence="2">Belongs to the tobravirus protein 2b family.</text>
</comment>
<keyword id="KW-0946">Virion</keyword>
<dbReference type="EMBL" id="X03955">
    <property type="protein sequence ID" value="CAA27585.1"/>
    <property type="molecule type" value="Genomic_RNA"/>
</dbReference>
<dbReference type="PIR" id="A04185">
    <property type="entry name" value="WMBV2T"/>
</dbReference>
<dbReference type="SMR" id="P05078"/>
<dbReference type="GO" id="GO:0044423">
    <property type="term" value="C:virion component"/>
    <property type="evidence" value="ECO:0007669"/>
    <property type="project" value="UniProtKB-KW"/>
</dbReference>
<dbReference type="InterPro" id="IPR007935">
    <property type="entry name" value="Tobravirus_2B"/>
</dbReference>
<dbReference type="Pfam" id="PF05271">
    <property type="entry name" value="Tobravirus_2B"/>
    <property type="match status" value="1"/>
</dbReference>
<feature type="chain" id="PRO_0000222515" description="Protein 2b">
    <location>
        <begin position="1"/>
        <end position="255"/>
    </location>
</feature>
<name>2B_TRVTC</name>